<dbReference type="EMBL" id="AY005137">
    <property type="protein sequence ID" value="AAG12418.1"/>
    <property type="molecule type" value="Genomic_DNA"/>
</dbReference>
<dbReference type="EMBL" id="AE006470">
    <property type="protein sequence ID" value="AAM72836.1"/>
    <property type="molecule type" value="Genomic_DNA"/>
</dbReference>
<dbReference type="RefSeq" id="NP_662494.1">
    <property type="nucleotide sequence ID" value="NC_002932.3"/>
</dbReference>
<dbReference type="RefSeq" id="WP_010933275.1">
    <property type="nucleotide sequence ID" value="NC_002932.3"/>
</dbReference>
<dbReference type="SMR" id="Q93SU8"/>
<dbReference type="STRING" id="194439.CT1611"/>
<dbReference type="DNASU" id="1006107"/>
<dbReference type="EnsemblBacteria" id="AAM72836">
    <property type="protein sequence ID" value="AAM72836"/>
    <property type="gene ID" value="CT1611"/>
</dbReference>
<dbReference type="KEGG" id="cte:CT1611"/>
<dbReference type="PATRIC" id="fig|194439.7.peg.1456"/>
<dbReference type="eggNOG" id="COG0227">
    <property type="taxonomic scope" value="Bacteria"/>
</dbReference>
<dbReference type="HOGENOM" id="CLU_064548_3_1_10"/>
<dbReference type="OrthoDB" id="9805609at2"/>
<dbReference type="Proteomes" id="UP000001007">
    <property type="component" value="Chromosome"/>
</dbReference>
<dbReference type="GO" id="GO:1990904">
    <property type="term" value="C:ribonucleoprotein complex"/>
    <property type="evidence" value="ECO:0007669"/>
    <property type="project" value="UniProtKB-KW"/>
</dbReference>
<dbReference type="GO" id="GO:0005840">
    <property type="term" value="C:ribosome"/>
    <property type="evidence" value="ECO:0007669"/>
    <property type="project" value="UniProtKB-KW"/>
</dbReference>
<dbReference type="GO" id="GO:0003735">
    <property type="term" value="F:structural constituent of ribosome"/>
    <property type="evidence" value="ECO:0007669"/>
    <property type="project" value="InterPro"/>
</dbReference>
<dbReference type="GO" id="GO:0006412">
    <property type="term" value="P:translation"/>
    <property type="evidence" value="ECO:0007669"/>
    <property type="project" value="UniProtKB-UniRule"/>
</dbReference>
<dbReference type="FunFam" id="2.30.170.40:FF:000001">
    <property type="entry name" value="50S ribosomal protein L28"/>
    <property type="match status" value="1"/>
</dbReference>
<dbReference type="Gene3D" id="2.30.170.40">
    <property type="entry name" value="Ribosomal protein L28/L24"/>
    <property type="match status" value="1"/>
</dbReference>
<dbReference type="HAMAP" id="MF_00373">
    <property type="entry name" value="Ribosomal_bL28"/>
    <property type="match status" value="1"/>
</dbReference>
<dbReference type="InterPro" id="IPR026569">
    <property type="entry name" value="Ribosomal_bL28"/>
</dbReference>
<dbReference type="InterPro" id="IPR034704">
    <property type="entry name" value="Ribosomal_bL28/bL31-like_sf"/>
</dbReference>
<dbReference type="InterPro" id="IPR001383">
    <property type="entry name" value="Ribosomal_bL28_bact-type"/>
</dbReference>
<dbReference type="InterPro" id="IPR037147">
    <property type="entry name" value="Ribosomal_bL28_sf"/>
</dbReference>
<dbReference type="NCBIfam" id="TIGR00009">
    <property type="entry name" value="L28"/>
    <property type="match status" value="1"/>
</dbReference>
<dbReference type="PANTHER" id="PTHR13528">
    <property type="entry name" value="39S RIBOSOMAL PROTEIN L28, MITOCHONDRIAL"/>
    <property type="match status" value="1"/>
</dbReference>
<dbReference type="PANTHER" id="PTHR13528:SF2">
    <property type="entry name" value="LARGE RIBOSOMAL SUBUNIT PROTEIN BL28M"/>
    <property type="match status" value="1"/>
</dbReference>
<dbReference type="Pfam" id="PF00830">
    <property type="entry name" value="Ribosomal_L28"/>
    <property type="match status" value="1"/>
</dbReference>
<dbReference type="SUPFAM" id="SSF143800">
    <property type="entry name" value="L28p-like"/>
    <property type="match status" value="1"/>
</dbReference>
<protein>
    <recommendedName>
        <fullName evidence="1">Large ribosomal subunit protein bL28</fullName>
    </recommendedName>
    <alternativeName>
        <fullName evidence="2">50S ribosomal protein L28</fullName>
    </alternativeName>
</protein>
<reference key="1">
    <citation type="journal article" date="2000" name="Science">
        <title>Molecular evidence for the early evolution of photosynthesis.</title>
        <authorList>
            <person name="Xiong J."/>
            <person name="Fischer W.M."/>
            <person name="Inoue K."/>
            <person name="Nakahara M."/>
            <person name="Bauer C.E."/>
        </authorList>
    </citation>
    <scope>NUCLEOTIDE SEQUENCE [GENOMIC DNA]</scope>
</reference>
<reference key="2">
    <citation type="journal article" date="2002" name="Proc. Natl. Acad. Sci. U.S.A.">
        <title>The complete genome sequence of Chlorobium tepidum TLS, a photosynthetic, anaerobic, green-sulfur bacterium.</title>
        <authorList>
            <person name="Eisen J.A."/>
            <person name="Nelson K.E."/>
            <person name="Paulsen I.T."/>
            <person name="Heidelberg J.F."/>
            <person name="Wu M."/>
            <person name="Dodson R.J."/>
            <person name="DeBoy R.T."/>
            <person name="Gwinn M.L."/>
            <person name="Nelson W.C."/>
            <person name="Haft D.H."/>
            <person name="Hickey E.K."/>
            <person name="Peterson J.D."/>
            <person name="Durkin A.S."/>
            <person name="Kolonay J.F."/>
            <person name="Yang F."/>
            <person name="Holt I.E."/>
            <person name="Umayam L.A."/>
            <person name="Mason T.M."/>
            <person name="Brenner M."/>
            <person name="Shea T.P."/>
            <person name="Parksey D.S."/>
            <person name="Nierman W.C."/>
            <person name="Feldblyum T.V."/>
            <person name="Hansen C.L."/>
            <person name="Craven M.B."/>
            <person name="Radune D."/>
            <person name="Vamathevan J.J."/>
            <person name="Khouri H.M."/>
            <person name="White O."/>
            <person name="Gruber T.M."/>
            <person name="Ketchum K.A."/>
            <person name="Venter J.C."/>
            <person name="Tettelin H."/>
            <person name="Bryant D.A."/>
            <person name="Fraser C.M."/>
        </authorList>
    </citation>
    <scope>NUCLEOTIDE SEQUENCE [LARGE SCALE GENOMIC DNA]</scope>
    <source>
        <strain>ATCC 49652 / DSM 12025 / NBRC 103806 / TLS</strain>
    </source>
</reference>
<evidence type="ECO:0000255" key="1">
    <source>
        <dbReference type="HAMAP-Rule" id="MF_00373"/>
    </source>
</evidence>
<evidence type="ECO:0000305" key="2"/>
<name>RL28_CHLTE</name>
<proteinExistence type="inferred from homology"/>
<accession>Q93SU8</accession>
<organism>
    <name type="scientific">Chlorobaculum tepidum (strain ATCC 49652 / DSM 12025 / NBRC 103806 / TLS)</name>
    <name type="common">Chlorobium tepidum</name>
    <dbReference type="NCBI Taxonomy" id="194439"/>
    <lineage>
        <taxon>Bacteria</taxon>
        <taxon>Pseudomonadati</taxon>
        <taxon>Chlorobiota</taxon>
        <taxon>Chlorobiia</taxon>
        <taxon>Chlorobiales</taxon>
        <taxon>Chlorobiaceae</taxon>
        <taxon>Chlorobaculum</taxon>
    </lineage>
</organism>
<keyword id="KW-1185">Reference proteome</keyword>
<keyword id="KW-0687">Ribonucleoprotein</keyword>
<keyword id="KW-0689">Ribosomal protein</keyword>
<comment type="similarity">
    <text evidence="1">Belongs to the bacterial ribosomal protein bL28 family.</text>
</comment>
<sequence>MSKVCVLTGKRPKYGNNVSHANNHTRTRFEPNLHTKRIWIEEERRWVKVRLTAKAMKIMSKTGTAELAKLLK</sequence>
<gene>
    <name evidence="1" type="primary">rpmB</name>
    <name type="synonym">rl28</name>
    <name type="ordered locus">CT1611</name>
</gene>
<feature type="chain" id="PRO_0000178456" description="Large ribosomal subunit protein bL28">
    <location>
        <begin position="1"/>
        <end position="72"/>
    </location>
</feature>